<feature type="chain" id="PRO_0000187646" description="Uroporphyrinogen decarboxylase">
    <location>
        <begin position="1"/>
        <end position="344"/>
    </location>
</feature>
<feature type="binding site" evidence="1">
    <location>
        <begin position="26"/>
        <end position="30"/>
    </location>
    <ligand>
        <name>substrate</name>
    </ligand>
</feature>
<feature type="binding site" evidence="1">
    <location>
        <position position="45"/>
    </location>
    <ligand>
        <name>substrate</name>
    </ligand>
</feature>
<feature type="binding site" evidence="1">
    <location>
        <position position="75"/>
    </location>
    <ligand>
        <name>substrate</name>
    </ligand>
</feature>
<feature type="binding site" evidence="1">
    <location>
        <position position="151"/>
    </location>
    <ligand>
        <name>substrate</name>
    </ligand>
</feature>
<feature type="binding site" evidence="1">
    <location>
        <position position="206"/>
    </location>
    <ligand>
        <name>substrate</name>
    </ligand>
</feature>
<feature type="binding site" evidence="1">
    <location>
        <position position="320"/>
    </location>
    <ligand>
        <name>substrate</name>
    </ligand>
</feature>
<feature type="site" description="Transition state stabilizer" evidence="1">
    <location>
        <position position="75"/>
    </location>
</feature>
<organism>
    <name type="scientific">Staphylococcus epidermidis (strain ATCC 35984 / DSM 28319 / BCRC 17069 / CCUG 31568 / BM 3577 / RP62A)</name>
    <dbReference type="NCBI Taxonomy" id="176279"/>
    <lineage>
        <taxon>Bacteria</taxon>
        <taxon>Bacillati</taxon>
        <taxon>Bacillota</taxon>
        <taxon>Bacilli</taxon>
        <taxon>Bacillales</taxon>
        <taxon>Staphylococcaceae</taxon>
        <taxon>Staphylococcus</taxon>
    </lineage>
</organism>
<evidence type="ECO:0000255" key="1">
    <source>
        <dbReference type="HAMAP-Rule" id="MF_00218"/>
    </source>
</evidence>
<protein>
    <recommendedName>
        <fullName evidence="1">Uroporphyrinogen decarboxylase</fullName>
        <shortName evidence="1">UPD</shortName>
        <shortName evidence="1">URO-D</shortName>
        <ecNumber evidence="1">4.1.1.37</ecNumber>
    </recommendedName>
</protein>
<accession>Q5HNA4</accession>
<name>DCUP_STAEQ</name>
<proteinExistence type="inferred from homology"/>
<comment type="function">
    <text evidence="1">Catalyzes the decarboxylation of four acetate groups of uroporphyrinogen-III to yield coproporphyrinogen-III.</text>
</comment>
<comment type="catalytic activity">
    <reaction evidence="1">
        <text>uroporphyrinogen III + 4 H(+) = coproporphyrinogen III + 4 CO2</text>
        <dbReference type="Rhea" id="RHEA:19865"/>
        <dbReference type="ChEBI" id="CHEBI:15378"/>
        <dbReference type="ChEBI" id="CHEBI:16526"/>
        <dbReference type="ChEBI" id="CHEBI:57308"/>
        <dbReference type="ChEBI" id="CHEBI:57309"/>
        <dbReference type="EC" id="4.1.1.37"/>
    </reaction>
</comment>
<comment type="pathway">
    <text evidence="1">Porphyrin-containing compound metabolism; protoporphyrin-IX biosynthesis; coproporphyrinogen-III from 5-aminolevulinate: step 4/4.</text>
</comment>
<comment type="subunit">
    <text evidence="1">Homodimer.</text>
</comment>
<comment type="subcellular location">
    <subcellularLocation>
        <location evidence="1">Cytoplasm</location>
    </subcellularLocation>
</comment>
<comment type="similarity">
    <text evidence="1">Belongs to the uroporphyrinogen decarboxylase family.</text>
</comment>
<keyword id="KW-0963">Cytoplasm</keyword>
<keyword id="KW-0210">Decarboxylase</keyword>
<keyword id="KW-0456">Lyase</keyword>
<keyword id="KW-0627">Porphyrin biosynthesis</keyword>
<keyword id="KW-1185">Reference proteome</keyword>
<gene>
    <name evidence="1" type="primary">hemE</name>
    <name type="ordered locus">SERP1368</name>
</gene>
<reference key="1">
    <citation type="journal article" date="2005" name="J. Bacteriol.">
        <title>Insights on evolution of virulence and resistance from the complete genome analysis of an early methicillin-resistant Staphylococcus aureus strain and a biofilm-producing methicillin-resistant Staphylococcus epidermidis strain.</title>
        <authorList>
            <person name="Gill S.R."/>
            <person name="Fouts D.E."/>
            <person name="Archer G.L."/>
            <person name="Mongodin E.F."/>
            <person name="DeBoy R.T."/>
            <person name="Ravel J."/>
            <person name="Paulsen I.T."/>
            <person name="Kolonay J.F."/>
            <person name="Brinkac L.M."/>
            <person name="Beanan M.J."/>
            <person name="Dodson R.J."/>
            <person name="Daugherty S.C."/>
            <person name="Madupu R."/>
            <person name="Angiuoli S.V."/>
            <person name="Durkin A.S."/>
            <person name="Haft D.H."/>
            <person name="Vamathevan J.J."/>
            <person name="Khouri H."/>
            <person name="Utterback T.R."/>
            <person name="Lee C."/>
            <person name="Dimitrov G."/>
            <person name="Jiang L."/>
            <person name="Qin H."/>
            <person name="Weidman J."/>
            <person name="Tran K."/>
            <person name="Kang K.H."/>
            <person name="Hance I.R."/>
            <person name="Nelson K.E."/>
            <person name="Fraser C.M."/>
        </authorList>
    </citation>
    <scope>NUCLEOTIDE SEQUENCE [LARGE SCALE GENOMIC DNA]</scope>
    <source>
        <strain>ATCC 35984 / DSM 28319 / BCRC 17069 / CCUG 31568 / BM 3577 / RP62A</strain>
    </source>
</reference>
<dbReference type="EC" id="4.1.1.37" evidence="1"/>
<dbReference type="EMBL" id="CP000029">
    <property type="protein sequence ID" value="AAW54745.1"/>
    <property type="molecule type" value="Genomic_DNA"/>
</dbReference>
<dbReference type="SMR" id="Q5HNA4"/>
<dbReference type="STRING" id="176279.SERP1368"/>
<dbReference type="KEGG" id="ser:SERP1368"/>
<dbReference type="eggNOG" id="COG0407">
    <property type="taxonomic scope" value="Bacteria"/>
</dbReference>
<dbReference type="HOGENOM" id="CLU_040933_0_1_9"/>
<dbReference type="UniPathway" id="UPA00251">
    <property type="reaction ID" value="UER00321"/>
</dbReference>
<dbReference type="Proteomes" id="UP000000531">
    <property type="component" value="Chromosome"/>
</dbReference>
<dbReference type="GO" id="GO:0005829">
    <property type="term" value="C:cytosol"/>
    <property type="evidence" value="ECO:0007669"/>
    <property type="project" value="TreeGrafter"/>
</dbReference>
<dbReference type="GO" id="GO:0004853">
    <property type="term" value="F:uroporphyrinogen decarboxylase activity"/>
    <property type="evidence" value="ECO:0007669"/>
    <property type="project" value="UniProtKB-UniRule"/>
</dbReference>
<dbReference type="GO" id="GO:0006782">
    <property type="term" value="P:protoporphyrinogen IX biosynthetic process"/>
    <property type="evidence" value="ECO:0007669"/>
    <property type="project" value="UniProtKB-UniRule"/>
</dbReference>
<dbReference type="CDD" id="cd00717">
    <property type="entry name" value="URO-D"/>
    <property type="match status" value="1"/>
</dbReference>
<dbReference type="FunFam" id="3.20.20.210:FF:000005">
    <property type="entry name" value="Uroporphyrinogen decarboxylase"/>
    <property type="match status" value="1"/>
</dbReference>
<dbReference type="Gene3D" id="3.20.20.210">
    <property type="match status" value="1"/>
</dbReference>
<dbReference type="HAMAP" id="MF_00218">
    <property type="entry name" value="URO_D"/>
    <property type="match status" value="1"/>
</dbReference>
<dbReference type="InterPro" id="IPR038071">
    <property type="entry name" value="UROD/MetE-like_sf"/>
</dbReference>
<dbReference type="InterPro" id="IPR006361">
    <property type="entry name" value="Uroporphyrinogen_deCO2ase_HemE"/>
</dbReference>
<dbReference type="InterPro" id="IPR000257">
    <property type="entry name" value="Uroporphyrinogen_deCOase"/>
</dbReference>
<dbReference type="NCBIfam" id="TIGR01464">
    <property type="entry name" value="hemE"/>
    <property type="match status" value="1"/>
</dbReference>
<dbReference type="PANTHER" id="PTHR21091">
    <property type="entry name" value="METHYLTETRAHYDROFOLATE:HOMOCYSTEINE METHYLTRANSFERASE RELATED"/>
    <property type="match status" value="1"/>
</dbReference>
<dbReference type="PANTHER" id="PTHR21091:SF169">
    <property type="entry name" value="UROPORPHYRINOGEN DECARBOXYLASE"/>
    <property type="match status" value="1"/>
</dbReference>
<dbReference type="Pfam" id="PF01208">
    <property type="entry name" value="URO-D"/>
    <property type="match status" value="1"/>
</dbReference>
<dbReference type="SUPFAM" id="SSF51726">
    <property type="entry name" value="UROD/MetE-like"/>
    <property type="match status" value="1"/>
</dbReference>
<dbReference type="PROSITE" id="PS00906">
    <property type="entry name" value="UROD_1"/>
    <property type="match status" value="1"/>
</dbReference>
<dbReference type="PROSITE" id="PS00907">
    <property type="entry name" value="UROD_2"/>
    <property type="match status" value="1"/>
</dbReference>
<sequence>MRSKNDTILKAIKGESTSHTPVWFMRQAGRSQPEYRKLKEKYSLFEITHQPELCAYVTHLPVDNYQTDAAVLYKDIMTPLKPIGVDVEIKSGIGPVISNPIQTVKDVERLSQIDPKRDVPYVLDTIKLLTEEKLNVPLIGFTGAPFTLASYMIEGGPSKNYNFTKAMMYRDEETWFALMNHLVDISIDYVVAQVEAGAEIIQIFDSWVGALNVKDYRYYIKPAMNKLISGIKAYYDVPIILFGVGASHLINEWNDLPIDVLGLDWRTTIKQADKMGVNKAIQGNLDPSVLLAPWDVIESRLKDILNQGLNRGKHIFNLGHGVFPEVKPETLRKVTEFVHNYTAK</sequence>